<accession>Q602J5</accession>
<protein>
    <recommendedName>
        <fullName evidence="1">Cell division topological specificity factor</fullName>
    </recommendedName>
</protein>
<evidence type="ECO:0000255" key="1">
    <source>
        <dbReference type="HAMAP-Rule" id="MF_00262"/>
    </source>
</evidence>
<keyword id="KW-0131">Cell cycle</keyword>
<keyword id="KW-0132">Cell division</keyword>
<keyword id="KW-1185">Reference proteome</keyword>
<reference key="1">
    <citation type="journal article" date="2004" name="PLoS Biol.">
        <title>Genomic insights into methanotrophy: the complete genome sequence of Methylococcus capsulatus (Bath).</title>
        <authorList>
            <person name="Ward N.L."/>
            <person name="Larsen O."/>
            <person name="Sakwa J."/>
            <person name="Bruseth L."/>
            <person name="Khouri H.M."/>
            <person name="Durkin A.S."/>
            <person name="Dimitrov G."/>
            <person name="Jiang L."/>
            <person name="Scanlan D."/>
            <person name="Kang K.H."/>
            <person name="Lewis M.R."/>
            <person name="Nelson K.E."/>
            <person name="Methe B.A."/>
            <person name="Wu M."/>
            <person name="Heidelberg J.F."/>
            <person name="Paulsen I.T."/>
            <person name="Fouts D.E."/>
            <person name="Ravel J."/>
            <person name="Tettelin H."/>
            <person name="Ren Q."/>
            <person name="Read T.D."/>
            <person name="DeBoy R.T."/>
            <person name="Seshadri R."/>
            <person name="Salzberg S.L."/>
            <person name="Jensen H.B."/>
            <person name="Birkeland N.K."/>
            <person name="Nelson W.C."/>
            <person name="Dodson R.J."/>
            <person name="Grindhaug S.H."/>
            <person name="Holt I.E."/>
            <person name="Eidhammer I."/>
            <person name="Jonasen I."/>
            <person name="Vanaken S."/>
            <person name="Utterback T.R."/>
            <person name="Feldblyum T.V."/>
            <person name="Fraser C.M."/>
            <person name="Lillehaug J.R."/>
            <person name="Eisen J.A."/>
        </authorList>
    </citation>
    <scope>NUCLEOTIDE SEQUENCE [LARGE SCALE GENOMIC DNA]</scope>
    <source>
        <strain>ATCC 33009 / NCIMB 11132 / Bath</strain>
    </source>
</reference>
<feature type="chain" id="PRO_0000298135" description="Cell division topological specificity factor">
    <location>
        <begin position="1"/>
        <end position="93"/>
    </location>
</feature>
<sequence>MGLLDYFRGSRTDSAAVAKERLQILVAHERAERNKPDYLPLLQKELLEVIRKYVNVGQDAITVTMEKDDNREVLELNVVLPDAIESRPKRKRG</sequence>
<organism>
    <name type="scientific">Methylococcus capsulatus (strain ATCC 33009 / NCIMB 11132 / Bath)</name>
    <dbReference type="NCBI Taxonomy" id="243233"/>
    <lineage>
        <taxon>Bacteria</taxon>
        <taxon>Pseudomonadati</taxon>
        <taxon>Pseudomonadota</taxon>
        <taxon>Gammaproteobacteria</taxon>
        <taxon>Methylococcales</taxon>
        <taxon>Methylococcaceae</taxon>
        <taxon>Methylococcus</taxon>
    </lineage>
</organism>
<gene>
    <name evidence="1" type="primary">minE</name>
    <name type="ordered locus">MCA3068</name>
</gene>
<dbReference type="EMBL" id="AE017282">
    <property type="protein sequence ID" value="AAU90864.1"/>
    <property type="molecule type" value="Genomic_DNA"/>
</dbReference>
<dbReference type="RefSeq" id="WP_010962252.1">
    <property type="nucleotide sequence ID" value="NC_002977.6"/>
</dbReference>
<dbReference type="SMR" id="Q602J5"/>
<dbReference type="STRING" id="243233.MCA3068"/>
<dbReference type="GeneID" id="88225227"/>
<dbReference type="KEGG" id="mca:MCA3068"/>
<dbReference type="eggNOG" id="COG0851">
    <property type="taxonomic scope" value="Bacteria"/>
</dbReference>
<dbReference type="HOGENOM" id="CLU_137929_2_1_6"/>
<dbReference type="Proteomes" id="UP000006821">
    <property type="component" value="Chromosome"/>
</dbReference>
<dbReference type="GO" id="GO:0051301">
    <property type="term" value="P:cell division"/>
    <property type="evidence" value="ECO:0007669"/>
    <property type="project" value="UniProtKB-KW"/>
</dbReference>
<dbReference type="GO" id="GO:0032955">
    <property type="term" value="P:regulation of division septum assembly"/>
    <property type="evidence" value="ECO:0007669"/>
    <property type="project" value="InterPro"/>
</dbReference>
<dbReference type="FunFam" id="3.30.1070.10:FF:000001">
    <property type="entry name" value="Cell division topological specificity factor"/>
    <property type="match status" value="1"/>
</dbReference>
<dbReference type="Gene3D" id="3.30.1070.10">
    <property type="entry name" value="Cell division topological specificity factor MinE"/>
    <property type="match status" value="1"/>
</dbReference>
<dbReference type="HAMAP" id="MF_00262">
    <property type="entry name" value="MinE"/>
    <property type="match status" value="1"/>
</dbReference>
<dbReference type="InterPro" id="IPR005527">
    <property type="entry name" value="MinE"/>
</dbReference>
<dbReference type="InterPro" id="IPR036707">
    <property type="entry name" value="MinE_sf"/>
</dbReference>
<dbReference type="NCBIfam" id="TIGR01215">
    <property type="entry name" value="minE"/>
    <property type="match status" value="1"/>
</dbReference>
<dbReference type="NCBIfam" id="NF001422">
    <property type="entry name" value="PRK00296.1"/>
    <property type="match status" value="1"/>
</dbReference>
<dbReference type="Pfam" id="PF03776">
    <property type="entry name" value="MinE"/>
    <property type="match status" value="1"/>
</dbReference>
<dbReference type="SUPFAM" id="SSF55229">
    <property type="entry name" value="Cell division protein MinE topological specificity domain"/>
    <property type="match status" value="1"/>
</dbReference>
<comment type="function">
    <text evidence="1">Prevents the cell division inhibition by proteins MinC and MinD at internal division sites while permitting inhibition at polar sites. This ensures cell division at the proper site by restricting the formation of a division septum at the midpoint of the long axis of the cell.</text>
</comment>
<comment type="similarity">
    <text evidence="1">Belongs to the MinE family.</text>
</comment>
<name>MINE_METCA</name>
<proteinExistence type="inferred from homology"/>